<evidence type="ECO:0000255" key="1">
    <source>
        <dbReference type="HAMAP-Rule" id="MF_00268"/>
    </source>
</evidence>
<organism>
    <name type="scientific">Helicobacter pylori (strain HPAG1)</name>
    <dbReference type="NCBI Taxonomy" id="357544"/>
    <lineage>
        <taxon>Bacteria</taxon>
        <taxon>Pseudomonadati</taxon>
        <taxon>Campylobacterota</taxon>
        <taxon>Epsilonproteobacteria</taxon>
        <taxon>Campylobacterales</taxon>
        <taxon>Helicobacteraceae</taxon>
        <taxon>Helicobacter</taxon>
    </lineage>
</organism>
<reference key="1">
    <citation type="journal article" date="2006" name="Proc. Natl. Acad. Sci. U.S.A.">
        <title>The complete genome sequence of a chronic atrophic gastritis Helicobacter pylori strain: evolution during disease progression.</title>
        <authorList>
            <person name="Oh J.D."/>
            <person name="Kling-Baeckhed H."/>
            <person name="Giannakis M."/>
            <person name="Xu J."/>
            <person name="Fulton R.S."/>
            <person name="Fulton L.A."/>
            <person name="Cordum H.S."/>
            <person name="Wang C."/>
            <person name="Elliott G."/>
            <person name="Edwards J."/>
            <person name="Mardis E.R."/>
            <person name="Engstrand L.G."/>
            <person name="Gordon J.I."/>
        </authorList>
    </citation>
    <scope>NUCLEOTIDE SEQUENCE [LARGE SCALE GENOMIC DNA]</scope>
    <source>
        <strain>HPAG1</strain>
    </source>
</reference>
<dbReference type="EMBL" id="CP000241">
    <property type="protein sequence ID" value="ABF84218.1"/>
    <property type="molecule type" value="Genomic_DNA"/>
</dbReference>
<dbReference type="RefSeq" id="WP_000952097.1">
    <property type="nucleotide sequence ID" value="NC_008086.1"/>
</dbReference>
<dbReference type="SMR" id="Q1CV04"/>
<dbReference type="KEGG" id="hpa:HPAG1_0151"/>
<dbReference type="HOGENOM" id="CLU_040469_1_2_7"/>
<dbReference type="GO" id="GO:0005829">
    <property type="term" value="C:cytosol"/>
    <property type="evidence" value="ECO:0007669"/>
    <property type="project" value="TreeGrafter"/>
</dbReference>
<dbReference type="GO" id="GO:0005524">
    <property type="term" value="F:ATP binding"/>
    <property type="evidence" value="ECO:0007669"/>
    <property type="project" value="UniProtKB-UniRule"/>
</dbReference>
<dbReference type="GO" id="GO:0016887">
    <property type="term" value="F:ATP hydrolysis activity"/>
    <property type="evidence" value="ECO:0007669"/>
    <property type="project" value="InterPro"/>
</dbReference>
<dbReference type="GO" id="GO:0140664">
    <property type="term" value="F:ATP-dependent DNA damage sensor activity"/>
    <property type="evidence" value="ECO:0007669"/>
    <property type="project" value="InterPro"/>
</dbReference>
<dbReference type="GO" id="GO:0003684">
    <property type="term" value="F:damaged DNA binding"/>
    <property type="evidence" value="ECO:0007669"/>
    <property type="project" value="UniProtKB-UniRule"/>
</dbReference>
<dbReference type="GO" id="GO:0003697">
    <property type="term" value="F:single-stranded DNA binding"/>
    <property type="evidence" value="ECO:0007669"/>
    <property type="project" value="UniProtKB-UniRule"/>
</dbReference>
<dbReference type="GO" id="GO:0006310">
    <property type="term" value="P:DNA recombination"/>
    <property type="evidence" value="ECO:0007669"/>
    <property type="project" value="UniProtKB-UniRule"/>
</dbReference>
<dbReference type="GO" id="GO:0006281">
    <property type="term" value="P:DNA repair"/>
    <property type="evidence" value="ECO:0007669"/>
    <property type="project" value="UniProtKB-UniRule"/>
</dbReference>
<dbReference type="GO" id="GO:0009432">
    <property type="term" value="P:SOS response"/>
    <property type="evidence" value="ECO:0007669"/>
    <property type="project" value="UniProtKB-UniRule"/>
</dbReference>
<dbReference type="CDD" id="cd00983">
    <property type="entry name" value="RecA"/>
    <property type="match status" value="1"/>
</dbReference>
<dbReference type="FunFam" id="3.40.50.300:FF:000087">
    <property type="entry name" value="Recombinase RecA"/>
    <property type="match status" value="1"/>
</dbReference>
<dbReference type="Gene3D" id="3.40.50.300">
    <property type="entry name" value="P-loop containing nucleotide triphosphate hydrolases"/>
    <property type="match status" value="1"/>
</dbReference>
<dbReference type="HAMAP" id="MF_00268">
    <property type="entry name" value="RecA"/>
    <property type="match status" value="1"/>
</dbReference>
<dbReference type="InterPro" id="IPR003593">
    <property type="entry name" value="AAA+_ATPase"/>
</dbReference>
<dbReference type="InterPro" id="IPR013765">
    <property type="entry name" value="DNA_recomb/repair_RecA"/>
</dbReference>
<dbReference type="InterPro" id="IPR020584">
    <property type="entry name" value="DNA_recomb/repair_RecA_CS"/>
</dbReference>
<dbReference type="InterPro" id="IPR027417">
    <property type="entry name" value="P-loop_NTPase"/>
</dbReference>
<dbReference type="InterPro" id="IPR049261">
    <property type="entry name" value="RecA-like_C"/>
</dbReference>
<dbReference type="InterPro" id="IPR049428">
    <property type="entry name" value="RecA-like_N"/>
</dbReference>
<dbReference type="InterPro" id="IPR020588">
    <property type="entry name" value="RecA_ATP-bd"/>
</dbReference>
<dbReference type="InterPro" id="IPR023400">
    <property type="entry name" value="RecA_C_sf"/>
</dbReference>
<dbReference type="InterPro" id="IPR020587">
    <property type="entry name" value="RecA_monomer-monomer_interface"/>
</dbReference>
<dbReference type="NCBIfam" id="TIGR02012">
    <property type="entry name" value="tigrfam_recA"/>
    <property type="match status" value="1"/>
</dbReference>
<dbReference type="PANTHER" id="PTHR45900:SF1">
    <property type="entry name" value="MITOCHONDRIAL DNA REPAIR PROTEIN RECA HOMOLOG-RELATED"/>
    <property type="match status" value="1"/>
</dbReference>
<dbReference type="PANTHER" id="PTHR45900">
    <property type="entry name" value="RECA"/>
    <property type="match status" value="1"/>
</dbReference>
<dbReference type="Pfam" id="PF00154">
    <property type="entry name" value="RecA"/>
    <property type="match status" value="1"/>
</dbReference>
<dbReference type="Pfam" id="PF21096">
    <property type="entry name" value="RecA_C"/>
    <property type="match status" value="1"/>
</dbReference>
<dbReference type="PRINTS" id="PR00142">
    <property type="entry name" value="RECA"/>
</dbReference>
<dbReference type="SMART" id="SM00382">
    <property type="entry name" value="AAA"/>
    <property type="match status" value="1"/>
</dbReference>
<dbReference type="SUPFAM" id="SSF52540">
    <property type="entry name" value="P-loop containing nucleoside triphosphate hydrolases"/>
    <property type="match status" value="1"/>
</dbReference>
<dbReference type="SUPFAM" id="SSF54752">
    <property type="entry name" value="RecA protein, C-terminal domain"/>
    <property type="match status" value="1"/>
</dbReference>
<dbReference type="PROSITE" id="PS00321">
    <property type="entry name" value="RECA_1"/>
    <property type="match status" value="1"/>
</dbReference>
<dbReference type="PROSITE" id="PS50162">
    <property type="entry name" value="RECA_2"/>
    <property type="match status" value="1"/>
</dbReference>
<dbReference type="PROSITE" id="PS50163">
    <property type="entry name" value="RECA_3"/>
    <property type="match status" value="1"/>
</dbReference>
<proteinExistence type="inferred from homology"/>
<protein>
    <recommendedName>
        <fullName evidence="1">Protein RecA</fullName>
    </recommendedName>
    <alternativeName>
        <fullName evidence="1">Recombinase A</fullName>
    </alternativeName>
</protein>
<sequence length="347" mass="37654">MAIDEDKQKAISLAIKQIDKVFGKGALVRLGDKQVEKIDAISTGSLGLDLALGIGGVPKGRIIEIYGPESSGKTTLSLHIIAECQKNGGVCAFIDAEHALDVHYAKRLGVDTENLLVSQPDTGEQALEILETITRSGGIDLVVVDSVAALTPKAEIDGDMGDQHVGLQARLMSHALRKITGVLHKMNTTLIFINQIRMKIGMMGYGSPETTTGGNALKFYASVRIDIRRIAALKQNEQHIGNRAKAKVVKNKVAPPFREAEFDIMFGEGISKEGEIIDYGVKLDIVDKSGAWLSYQDKKLGQGRENAKALLKEDKALADEITLKIKESIGSNEEIMPLPDEPLEEME</sequence>
<comment type="function">
    <text evidence="1">Can catalyze the hydrolysis of ATP in the presence of single-stranded DNA, the ATP-dependent uptake of single-stranded DNA by duplex DNA, and the ATP-dependent hybridization of homologous single-stranded DNAs. It interacts with LexA causing its activation and leading to its autocatalytic cleavage.</text>
</comment>
<comment type="subcellular location">
    <subcellularLocation>
        <location evidence="1">Cytoplasm</location>
    </subcellularLocation>
</comment>
<comment type="similarity">
    <text evidence="1">Belongs to the RecA family.</text>
</comment>
<accession>Q1CV04</accession>
<keyword id="KW-0067">ATP-binding</keyword>
<keyword id="KW-0963">Cytoplasm</keyword>
<keyword id="KW-0227">DNA damage</keyword>
<keyword id="KW-0233">DNA recombination</keyword>
<keyword id="KW-0234">DNA repair</keyword>
<keyword id="KW-0238">DNA-binding</keyword>
<keyword id="KW-0547">Nucleotide-binding</keyword>
<keyword id="KW-0742">SOS response</keyword>
<feature type="chain" id="PRO_1000047932" description="Protein RecA">
    <location>
        <begin position="1"/>
        <end position="347"/>
    </location>
</feature>
<feature type="binding site" evidence="1">
    <location>
        <begin position="67"/>
        <end position="74"/>
    </location>
    <ligand>
        <name>ATP</name>
        <dbReference type="ChEBI" id="CHEBI:30616"/>
    </ligand>
</feature>
<name>RECA_HELPH</name>
<gene>
    <name evidence="1" type="primary">recA</name>
    <name type="ordered locus">HPAG1_0151</name>
</gene>